<protein>
    <recommendedName>
        <fullName evidence="1">tRNA (guanine-N(7)-)-methyltransferase</fullName>
        <ecNumber evidence="1">2.1.1.33</ecNumber>
    </recommendedName>
    <alternativeName>
        <fullName evidence="1">tRNA (guanine(46)-N(7))-methyltransferase</fullName>
    </alternativeName>
    <alternativeName>
        <fullName evidence="1">tRNA(m7G46)-methyltransferase</fullName>
    </alternativeName>
</protein>
<keyword id="KW-0489">Methyltransferase</keyword>
<keyword id="KW-0539">Nucleus</keyword>
<keyword id="KW-1185">Reference proteome</keyword>
<keyword id="KW-0694">RNA-binding</keyword>
<keyword id="KW-0949">S-adenosyl-L-methionine</keyword>
<keyword id="KW-0808">Transferase</keyword>
<keyword id="KW-0819">tRNA processing</keyword>
<keyword id="KW-0820">tRNA-binding</keyword>
<organism>
    <name type="scientific">Oryza sativa subsp. japonica</name>
    <name type="common">Rice</name>
    <dbReference type="NCBI Taxonomy" id="39947"/>
    <lineage>
        <taxon>Eukaryota</taxon>
        <taxon>Viridiplantae</taxon>
        <taxon>Streptophyta</taxon>
        <taxon>Embryophyta</taxon>
        <taxon>Tracheophyta</taxon>
        <taxon>Spermatophyta</taxon>
        <taxon>Magnoliopsida</taxon>
        <taxon>Liliopsida</taxon>
        <taxon>Poales</taxon>
        <taxon>Poaceae</taxon>
        <taxon>BOP clade</taxon>
        <taxon>Oryzoideae</taxon>
        <taxon>Oryzeae</taxon>
        <taxon>Oryzinae</taxon>
        <taxon>Oryza</taxon>
        <taxon>Oryza sativa</taxon>
    </lineage>
</organism>
<name>TRMB_ORYSJ</name>
<evidence type="ECO:0000255" key="1">
    <source>
        <dbReference type="HAMAP-Rule" id="MF_03055"/>
    </source>
</evidence>
<comment type="function">
    <text evidence="1">Catalyzes the formation of N(7)-methylguanine at position 46 (m7G46) in tRNA.</text>
</comment>
<comment type="catalytic activity">
    <reaction evidence="1">
        <text>guanosine(46) in tRNA + S-adenosyl-L-methionine = N(7)-methylguanosine(46) in tRNA + S-adenosyl-L-homocysteine</text>
        <dbReference type="Rhea" id="RHEA:42708"/>
        <dbReference type="Rhea" id="RHEA-COMP:10188"/>
        <dbReference type="Rhea" id="RHEA-COMP:10189"/>
        <dbReference type="ChEBI" id="CHEBI:57856"/>
        <dbReference type="ChEBI" id="CHEBI:59789"/>
        <dbReference type="ChEBI" id="CHEBI:74269"/>
        <dbReference type="ChEBI" id="CHEBI:74480"/>
        <dbReference type="EC" id="2.1.1.33"/>
    </reaction>
</comment>
<comment type="pathway">
    <text evidence="1">tRNA modification; N(7)-methylguanine-tRNA biosynthesis.</text>
</comment>
<comment type="subcellular location">
    <subcellularLocation>
        <location evidence="1">Nucleus</location>
    </subcellularLocation>
</comment>
<comment type="similarity">
    <text evidence="1">Belongs to the class I-like SAM-binding methyltransferase superfamily. TrmB family.</text>
</comment>
<gene>
    <name type="ordered locus">Os06g0236900</name>
    <name type="ordered locus">LOC_Os06g12990</name>
    <name type="ORF">OsJ_20740</name>
    <name type="ORF">OSJNBa0068B06.2</name>
    <name type="ORF">OSJNBa0080E19.41</name>
</gene>
<accession>Q67V78</accession>
<dbReference type="EC" id="2.1.1.33" evidence="1"/>
<dbReference type="EMBL" id="AP004995">
    <property type="protein sequence ID" value="BAD37888.1"/>
    <property type="molecule type" value="Genomic_DNA"/>
</dbReference>
<dbReference type="EMBL" id="AP005170">
    <property type="protein sequence ID" value="BAD37941.1"/>
    <property type="molecule type" value="Genomic_DNA"/>
</dbReference>
<dbReference type="EMBL" id="AP014962">
    <property type="status" value="NOT_ANNOTATED_CDS"/>
    <property type="molecule type" value="Genomic_DNA"/>
</dbReference>
<dbReference type="EMBL" id="CM000143">
    <property type="protein sequence ID" value="EAZ36410.1"/>
    <property type="molecule type" value="Genomic_DNA"/>
</dbReference>
<dbReference type="RefSeq" id="XP_015643817.1">
    <property type="nucleotide sequence ID" value="XM_015788331.1"/>
</dbReference>
<dbReference type="SMR" id="Q67V78"/>
<dbReference type="FunCoup" id="Q67V78">
    <property type="interactions" value="2275"/>
</dbReference>
<dbReference type="STRING" id="39947.Q67V78"/>
<dbReference type="PaxDb" id="39947-Q67V78"/>
<dbReference type="eggNOG" id="KOG3115">
    <property type="taxonomic scope" value="Eukaryota"/>
</dbReference>
<dbReference type="InParanoid" id="Q67V78"/>
<dbReference type="OrthoDB" id="47276at2759"/>
<dbReference type="UniPathway" id="UPA00989"/>
<dbReference type="Proteomes" id="UP000000763">
    <property type="component" value="Chromosome 6"/>
</dbReference>
<dbReference type="Proteomes" id="UP000007752">
    <property type="component" value="Chromosome 6"/>
</dbReference>
<dbReference type="Proteomes" id="UP000059680">
    <property type="component" value="Chromosome 6"/>
</dbReference>
<dbReference type="GO" id="GO:0005634">
    <property type="term" value="C:nucleus"/>
    <property type="evidence" value="ECO:0007669"/>
    <property type="project" value="UniProtKB-SubCell"/>
</dbReference>
<dbReference type="GO" id="GO:0043527">
    <property type="term" value="C:tRNA methyltransferase complex"/>
    <property type="evidence" value="ECO:0000318"/>
    <property type="project" value="GO_Central"/>
</dbReference>
<dbReference type="GO" id="GO:0008176">
    <property type="term" value="F:tRNA (guanine(46)-N7)-methyltransferase activity"/>
    <property type="evidence" value="ECO:0000318"/>
    <property type="project" value="GO_Central"/>
</dbReference>
<dbReference type="GO" id="GO:0000049">
    <property type="term" value="F:tRNA binding"/>
    <property type="evidence" value="ECO:0007669"/>
    <property type="project" value="UniProtKB-UniRule"/>
</dbReference>
<dbReference type="GO" id="GO:0036265">
    <property type="term" value="P:RNA (guanine-N7)-methylation"/>
    <property type="evidence" value="ECO:0000318"/>
    <property type="project" value="GO_Central"/>
</dbReference>
<dbReference type="GO" id="GO:0030488">
    <property type="term" value="P:tRNA methylation"/>
    <property type="evidence" value="ECO:0000318"/>
    <property type="project" value="GO_Central"/>
</dbReference>
<dbReference type="CDD" id="cd02440">
    <property type="entry name" value="AdoMet_MTases"/>
    <property type="match status" value="1"/>
</dbReference>
<dbReference type="FunFam" id="3.40.50.150:FF:000158">
    <property type="entry name" value="tRNA (guanine-N(7)-)-methyltransferase"/>
    <property type="match status" value="1"/>
</dbReference>
<dbReference type="Gene3D" id="3.40.50.150">
    <property type="entry name" value="Vaccinia Virus protein VP39"/>
    <property type="match status" value="1"/>
</dbReference>
<dbReference type="HAMAP" id="MF_03055">
    <property type="entry name" value="tRNA_methyltr_TrmB_euk"/>
    <property type="match status" value="1"/>
</dbReference>
<dbReference type="InterPro" id="IPR029063">
    <property type="entry name" value="SAM-dependent_MTases_sf"/>
</dbReference>
<dbReference type="InterPro" id="IPR025763">
    <property type="entry name" value="Trm8_euk"/>
</dbReference>
<dbReference type="InterPro" id="IPR003358">
    <property type="entry name" value="tRNA_(Gua-N-7)_MeTrfase_Trmb"/>
</dbReference>
<dbReference type="NCBIfam" id="TIGR00091">
    <property type="entry name" value="tRNA (guanosine(46)-N7)-methyltransferase TrmB"/>
    <property type="match status" value="1"/>
</dbReference>
<dbReference type="PANTHER" id="PTHR23417">
    <property type="entry name" value="3-DEOXY-D-MANNO-OCTULOSONIC-ACID TRANSFERASE/TRNA GUANINE-N 7 - -METHYLTRANSFERASE"/>
    <property type="match status" value="1"/>
</dbReference>
<dbReference type="PANTHER" id="PTHR23417:SF16">
    <property type="entry name" value="TRNA (GUANINE-N(7)-)-METHYLTRANSFERASE"/>
    <property type="match status" value="1"/>
</dbReference>
<dbReference type="Pfam" id="PF02390">
    <property type="entry name" value="Methyltransf_4"/>
    <property type="match status" value="1"/>
</dbReference>
<dbReference type="SUPFAM" id="SSF53335">
    <property type="entry name" value="S-adenosyl-L-methionine-dependent methyltransferases"/>
    <property type="match status" value="1"/>
</dbReference>
<dbReference type="PROSITE" id="PS51625">
    <property type="entry name" value="SAM_MT_TRMB"/>
    <property type="match status" value="1"/>
</dbReference>
<reference key="1">
    <citation type="journal article" date="2005" name="Nature">
        <title>The map-based sequence of the rice genome.</title>
        <authorList>
            <consortium name="International rice genome sequencing project (IRGSP)"/>
        </authorList>
    </citation>
    <scope>NUCLEOTIDE SEQUENCE [LARGE SCALE GENOMIC DNA]</scope>
    <source>
        <strain>cv. Nipponbare</strain>
    </source>
</reference>
<reference key="2">
    <citation type="journal article" date="2013" name="Rice">
        <title>Improvement of the Oryza sativa Nipponbare reference genome using next generation sequence and optical map data.</title>
        <authorList>
            <person name="Kawahara Y."/>
            <person name="de la Bastide M."/>
            <person name="Hamilton J.P."/>
            <person name="Kanamori H."/>
            <person name="McCombie W.R."/>
            <person name="Ouyang S."/>
            <person name="Schwartz D.C."/>
            <person name="Tanaka T."/>
            <person name="Wu J."/>
            <person name="Zhou S."/>
            <person name="Childs K.L."/>
            <person name="Davidson R.M."/>
            <person name="Lin H."/>
            <person name="Quesada-Ocampo L."/>
            <person name="Vaillancourt B."/>
            <person name="Sakai H."/>
            <person name="Lee S.S."/>
            <person name="Kim J."/>
            <person name="Numa H."/>
            <person name="Itoh T."/>
            <person name="Buell C.R."/>
            <person name="Matsumoto T."/>
        </authorList>
    </citation>
    <scope>GENOME REANNOTATION</scope>
    <source>
        <strain>cv. Nipponbare</strain>
    </source>
</reference>
<reference key="3">
    <citation type="journal article" date="2005" name="PLoS Biol.">
        <title>The genomes of Oryza sativa: a history of duplications.</title>
        <authorList>
            <person name="Yu J."/>
            <person name="Wang J."/>
            <person name="Lin W."/>
            <person name="Li S."/>
            <person name="Li H."/>
            <person name="Zhou J."/>
            <person name="Ni P."/>
            <person name="Dong W."/>
            <person name="Hu S."/>
            <person name="Zeng C."/>
            <person name="Zhang J."/>
            <person name="Zhang Y."/>
            <person name="Li R."/>
            <person name="Xu Z."/>
            <person name="Li S."/>
            <person name="Li X."/>
            <person name="Zheng H."/>
            <person name="Cong L."/>
            <person name="Lin L."/>
            <person name="Yin J."/>
            <person name="Geng J."/>
            <person name="Li G."/>
            <person name="Shi J."/>
            <person name="Liu J."/>
            <person name="Lv H."/>
            <person name="Li J."/>
            <person name="Wang J."/>
            <person name="Deng Y."/>
            <person name="Ran L."/>
            <person name="Shi X."/>
            <person name="Wang X."/>
            <person name="Wu Q."/>
            <person name="Li C."/>
            <person name="Ren X."/>
            <person name="Wang J."/>
            <person name="Wang X."/>
            <person name="Li D."/>
            <person name="Liu D."/>
            <person name="Zhang X."/>
            <person name="Ji Z."/>
            <person name="Zhao W."/>
            <person name="Sun Y."/>
            <person name="Zhang Z."/>
            <person name="Bao J."/>
            <person name="Han Y."/>
            <person name="Dong L."/>
            <person name="Ji J."/>
            <person name="Chen P."/>
            <person name="Wu S."/>
            <person name="Liu J."/>
            <person name="Xiao Y."/>
            <person name="Bu D."/>
            <person name="Tan J."/>
            <person name="Yang L."/>
            <person name="Ye C."/>
            <person name="Zhang J."/>
            <person name="Xu J."/>
            <person name="Zhou Y."/>
            <person name="Yu Y."/>
            <person name="Zhang B."/>
            <person name="Zhuang S."/>
            <person name="Wei H."/>
            <person name="Liu B."/>
            <person name="Lei M."/>
            <person name="Yu H."/>
            <person name="Li Y."/>
            <person name="Xu H."/>
            <person name="Wei S."/>
            <person name="He X."/>
            <person name="Fang L."/>
            <person name="Zhang Z."/>
            <person name="Zhang Y."/>
            <person name="Huang X."/>
            <person name="Su Z."/>
            <person name="Tong W."/>
            <person name="Li J."/>
            <person name="Tong Z."/>
            <person name="Li S."/>
            <person name="Ye J."/>
            <person name="Wang L."/>
            <person name="Fang L."/>
            <person name="Lei T."/>
            <person name="Chen C.-S."/>
            <person name="Chen H.-C."/>
            <person name="Xu Z."/>
            <person name="Li H."/>
            <person name="Huang H."/>
            <person name="Zhang F."/>
            <person name="Xu H."/>
            <person name="Li N."/>
            <person name="Zhao C."/>
            <person name="Li S."/>
            <person name="Dong L."/>
            <person name="Huang Y."/>
            <person name="Li L."/>
            <person name="Xi Y."/>
            <person name="Qi Q."/>
            <person name="Li W."/>
            <person name="Zhang B."/>
            <person name="Hu W."/>
            <person name="Zhang Y."/>
            <person name="Tian X."/>
            <person name="Jiao Y."/>
            <person name="Liang X."/>
            <person name="Jin J."/>
            <person name="Gao L."/>
            <person name="Zheng W."/>
            <person name="Hao B."/>
            <person name="Liu S.-M."/>
            <person name="Wang W."/>
            <person name="Yuan L."/>
            <person name="Cao M."/>
            <person name="McDermott J."/>
            <person name="Samudrala R."/>
            <person name="Wang J."/>
            <person name="Wong G.K.-S."/>
            <person name="Yang H."/>
        </authorList>
    </citation>
    <scope>NUCLEOTIDE SEQUENCE [LARGE SCALE GENOMIC DNA]</scope>
    <source>
        <strain>cv. Nipponbare</strain>
    </source>
</reference>
<sequence length="259" mass="29078">MASGDGANGGGGGGQGKLPRKRFYRARAHSNPLSDSHFPIPISPDEVDLSQHYPRYFPSGEGEARQGDAAVPRIRFADVGCGFGGLLVGLSTLFPDTLMIGMELRDKVTEYVKERILALRASNPGKYDNISVVRTNSMKYIPNYFRKAQLSKMFFLFPDPHFKEKNHRRRVISMQLLDEYAYVMEVGGIIYTITDVEELGEWMRSCLEKHPLFEAIPEEETKADPVVKLLSTATEEGQKVARNGGQTFQAIFRRISLQE</sequence>
<proteinExistence type="inferred from homology"/>
<feature type="chain" id="PRO_0000370582" description="tRNA (guanine-N(7)-)-methyltransferase">
    <location>
        <begin position="1"/>
        <end position="259"/>
    </location>
</feature>
<feature type="active site" evidence="1">
    <location>
        <position position="159"/>
    </location>
</feature>
<feature type="binding site" evidence="1">
    <location>
        <position position="80"/>
    </location>
    <ligand>
        <name>S-adenosyl-L-methionine</name>
        <dbReference type="ChEBI" id="CHEBI:59789"/>
    </ligand>
</feature>
<feature type="binding site" evidence="1">
    <location>
        <begin position="103"/>
        <end position="104"/>
    </location>
    <ligand>
        <name>S-adenosyl-L-methionine</name>
        <dbReference type="ChEBI" id="CHEBI:59789"/>
    </ligand>
</feature>
<feature type="binding site" evidence="1">
    <location>
        <begin position="136"/>
        <end position="137"/>
    </location>
    <ligand>
        <name>S-adenosyl-L-methionine</name>
        <dbReference type="ChEBI" id="CHEBI:59789"/>
    </ligand>
</feature>
<feature type="binding site" evidence="1">
    <location>
        <position position="156"/>
    </location>
    <ligand>
        <name>S-adenosyl-L-methionine</name>
        <dbReference type="ChEBI" id="CHEBI:59789"/>
    </ligand>
</feature>
<feature type="binding site" evidence="1">
    <location>
        <begin position="234"/>
        <end position="236"/>
    </location>
    <ligand>
        <name>S-adenosyl-L-methionine</name>
        <dbReference type="ChEBI" id="CHEBI:59789"/>
    </ligand>
</feature>